<dbReference type="EC" id="2.7.8.7" evidence="1"/>
<dbReference type="EMBL" id="CP000527">
    <property type="protein sequence ID" value="ABM28274.1"/>
    <property type="molecule type" value="Genomic_DNA"/>
</dbReference>
<dbReference type="RefSeq" id="WP_011792156.1">
    <property type="nucleotide sequence ID" value="NC_008751.1"/>
</dbReference>
<dbReference type="SMR" id="A1VCV8"/>
<dbReference type="KEGG" id="dvl:Dvul_1255"/>
<dbReference type="HOGENOM" id="CLU_089696_0_2_7"/>
<dbReference type="Proteomes" id="UP000009173">
    <property type="component" value="Chromosome"/>
</dbReference>
<dbReference type="GO" id="GO:0005737">
    <property type="term" value="C:cytoplasm"/>
    <property type="evidence" value="ECO:0007669"/>
    <property type="project" value="UniProtKB-SubCell"/>
</dbReference>
<dbReference type="GO" id="GO:0008897">
    <property type="term" value="F:holo-[acyl-carrier-protein] synthase activity"/>
    <property type="evidence" value="ECO:0007669"/>
    <property type="project" value="UniProtKB-UniRule"/>
</dbReference>
<dbReference type="GO" id="GO:0000287">
    <property type="term" value="F:magnesium ion binding"/>
    <property type="evidence" value="ECO:0007669"/>
    <property type="project" value="UniProtKB-UniRule"/>
</dbReference>
<dbReference type="GO" id="GO:0006633">
    <property type="term" value="P:fatty acid biosynthetic process"/>
    <property type="evidence" value="ECO:0007669"/>
    <property type="project" value="UniProtKB-UniRule"/>
</dbReference>
<dbReference type="Gene3D" id="3.90.470.20">
    <property type="entry name" value="4'-phosphopantetheinyl transferase domain"/>
    <property type="match status" value="1"/>
</dbReference>
<dbReference type="HAMAP" id="MF_00101">
    <property type="entry name" value="AcpS"/>
    <property type="match status" value="1"/>
</dbReference>
<dbReference type="InterPro" id="IPR008278">
    <property type="entry name" value="4-PPantetheinyl_Trfase_dom"/>
</dbReference>
<dbReference type="InterPro" id="IPR037143">
    <property type="entry name" value="4-PPantetheinyl_Trfase_dom_sf"/>
</dbReference>
<dbReference type="InterPro" id="IPR002582">
    <property type="entry name" value="ACPS"/>
</dbReference>
<dbReference type="InterPro" id="IPR004568">
    <property type="entry name" value="Ppantetheine-prot_Trfase_dom"/>
</dbReference>
<dbReference type="NCBIfam" id="TIGR00516">
    <property type="entry name" value="acpS"/>
    <property type="match status" value="1"/>
</dbReference>
<dbReference type="NCBIfam" id="TIGR00556">
    <property type="entry name" value="pantethn_trn"/>
    <property type="match status" value="1"/>
</dbReference>
<dbReference type="NCBIfam" id="NF011251">
    <property type="entry name" value="PRK14657.1"/>
    <property type="match status" value="1"/>
</dbReference>
<dbReference type="Pfam" id="PF01648">
    <property type="entry name" value="ACPS"/>
    <property type="match status" value="1"/>
</dbReference>
<dbReference type="SUPFAM" id="SSF56214">
    <property type="entry name" value="4'-phosphopantetheinyl transferase"/>
    <property type="match status" value="1"/>
</dbReference>
<protein>
    <recommendedName>
        <fullName evidence="1">Holo-[acyl-carrier-protein] synthase</fullName>
        <shortName evidence="1">Holo-ACP synthase</shortName>
        <ecNumber evidence="1">2.7.8.7</ecNumber>
    </recommendedName>
    <alternativeName>
        <fullName evidence="1">4'-phosphopantetheinyl transferase AcpS</fullName>
    </alternativeName>
</protein>
<gene>
    <name evidence="1" type="primary">acpS</name>
    <name type="ordered locus">Dvul_1255</name>
</gene>
<reference key="1">
    <citation type="journal article" date="2009" name="Environ. Microbiol.">
        <title>Contribution of mobile genetic elements to Desulfovibrio vulgaris genome plasticity.</title>
        <authorList>
            <person name="Walker C.B."/>
            <person name="Stolyar S."/>
            <person name="Chivian D."/>
            <person name="Pinel N."/>
            <person name="Gabster J.A."/>
            <person name="Dehal P.S."/>
            <person name="He Z."/>
            <person name="Yang Z.K."/>
            <person name="Yen H.C."/>
            <person name="Zhou J."/>
            <person name="Wall J.D."/>
            <person name="Hazen T.C."/>
            <person name="Arkin A.P."/>
            <person name="Stahl D.A."/>
        </authorList>
    </citation>
    <scope>NUCLEOTIDE SEQUENCE [LARGE SCALE GENOMIC DNA]</scope>
    <source>
        <strain>DP4</strain>
    </source>
</reference>
<feature type="chain" id="PRO_1000008419" description="Holo-[acyl-carrier-protein] synthase">
    <location>
        <begin position="1"/>
        <end position="124"/>
    </location>
</feature>
<feature type="binding site" evidence="1">
    <location>
        <position position="8"/>
    </location>
    <ligand>
        <name>Mg(2+)</name>
        <dbReference type="ChEBI" id="CHEBI:18420"/>
    </ligand>
</feature>
<feature type="binding site" evidence="1">
    <location>
        <position position="56"/>
    </location>
    <ligand>
        <name>Mg(2+)</name>
        <dbReference type="ChEBI" id="CHEBI:18420"/>
    </ligand>
</feature>
<proteinExistence type="inferred from homology"/>
<keyword id="KW-0963">Cytoplasm</keyword>
<keyword id="KW-0275">Fatty acid biosynthesis</keyword>
<keyword id="KW-0276">Fatty acid metabolism</keyword>
<keyword id="KW-0444">Lipid biosynthesis</keyword>
<keyword id="KW-0443">Lipid metabolism</keyword>
<keyword id="KW-0460">Magnesium</keyword>
<keyword id="KW-0479">Metal-binding</keyword>
<keyword id="KW-0808">Transferase</keyword>
<comment type="function">
    <text evidence="1">Transfers the 4'-phosphopantetheine moiety from coenzyme A to a Ser of acyl-carrier-protein.</text>
</comment>
<comment type="catalytic activity">
    <reaction evidence="1">
        <text>apo-[ACP] + CoA = holo-[ACP] + adenosine 3',5'-bisphosphate + H(+)</text>
        <dbReference type="Rhea" id="RHEA:12068"/>
        <dbReference type="Rhea" id="RHEA-COMP:9685"/>
        <dbReference type="Rhea" id="RHEA-COMP:9690"/>
        <dbReference type="ChEBI" id="CHEBI:15378"/>
        <dbReference type="ChEBI" id="CHEBI:29999"/>
        <dbReference type="ChEBI" id="CHEBI:57287"/>
        <dbReference type="ChEBI" id="CHEBI:58343"/>
        <dbReference type="ChEBI" id="CHEBI:64479"/>
        <dbReference type="EC" id="2.7.8.7"/>
    </reaction>
</comment>
<comment type="cofactor">
    <cofactor evidence="1">
        <name>Mg(2+)</name>
        <dbReference type="ChEBI" id="CHEBI:18420"/>
    </cofactor>
</comment>
<comment type="subcellular location">
    <subcellularLocation>
        <location evidence="1">Cytoplasm</location>
    </subcellularLocation>
</comment>
<comment type="similarity">
    <text evidence="1">Belongs to the P-Pant transferase superfamily. AcpS family.</text>
</comment>
<organism>
    <name type="scientific">Nitratidesulfovibrio vulgaris (strain DP4)</name>
    <name type="common">Desulfovibrio vulgaris</name>
    <dbReference type="NCBI Taxonomy" id="391774"/>
    <lineage>
        <taxon>Bacteria</taxon>
        <taxon>Pseudomonadati</taxon>
        <taxon>Thermodesulfobacteriota</taxon>
        <taxon>Desulfovibrionia</taxon>
        <taxon>Desulfovibrionales</taxon>
        <taxon>Desulfovibrionaceae</taxon>
        <taxon>Nitratidesulfovibrio</taxon>
    </lineage>
</organism>
<name>ACPS_NITV4</name>
<accession>A1VCV8</accession>
<sequence>MIVGIGIDITEIDRIAKGWGRFGDRFARRILHPHEVVRMPAANPVAFLAGRFAVKEAAVKALGTGFSDGIGPRDIEVGVAPAGAPQLVLHGKAAARMEALGATRTHVSLTHGRDTAAAVVILES</sequence>
<evidence type="ECO:0000255" key="1">
    <source>
        <dbReference type="HAMAP-Rule" id="MF_00101"/>
    </source>
</evidence>